<name>RS5_DESHD</name>
<dbReference type="EMBL" id="CP001336">
    <property type="protein sequence ID" value="ACL18506.1"/>
    <property type="molecule type" value="Genomic_DNA"/>
</dbReference>
<dbReference type="RefSeq" id="WP_015942764.1">
    <property type="nucleotide sequence ID" value="NC_011830.1"/>
</dbReference>
<dbReference type="SMR" id="B8G1Y3"/>
<dbReference type="KEGG" id="dhd:Dhaf_0439"/>
<dbReference type="HOGENOM" id="CLU_065898_2_2_9"/>
<dbReference type="Proteomes" id="UP000007726">
    <property type="component" value="Chromosome"/>
</dbReference>
<dbReference type="GO" id="GO:0015935">
    <property type="term" value="C:small ribosomal subunit"/>
    <property type="evidence" value="ECO:0007669"/>
    <property type="project" value="InterPro"/>
</dbReference>
<dbReference type="GO" id="GO:0019843">
    <property type="term" value="F:rRNA binding"/>
    <property type="evidence" value="ECO:0007669"/>
    <property type="project" value="UniProtKB-UniRule"/>
</dbReference>
<dbReference type="GO" id="GO:0003735">
    <property type="term" value="F:structural constituent of ribosome"/>
    <property type="evidence" value="ECO:0007669"/>
    <property type="project" value="InterPro"/>
</dbReference>
<dbReference type="GO" id="GO:0006412">
    <property type="term" value="P:translation"/>
    <property type="evidence" value="ECO:0007669"/>
    <property type="project" value="UniProtKB-UniRule"/>
</dbReference>
<dbReference type="FunFam" id="3.30.160.20:FF:000001">
    <property type="entry name" value="30S ribosomal protein S5"/>
    <property type="match status" value="1"/>
</dbReference>
<dbReference type="FunFam" id="3.30.230.10:FF:000002">
    <property type="entry name" value="30S ribosomal protein S5"/>
    <property type="match status" value="1"/>
</dbReference>
<dbReference type="Gene3D" id="3.30.160.20">
    <property type="match status" value="1"/>
</dbReference>
<dbReference type="Gene3D" id="3.30.230.10">
    <property type="match status" value="1"/>
</dbReference>
<dbReference type="HAMAP" id="MF_01307_B">
    <property type="entry name" value="Ribosomal_uS5_B"/>
    <property type="match status" value="1"/>
</dbReference>
<dbReference type="InterPro" id="IPR020568">
    <property type="entry name" value="Ribosomal_Su5_D2-typ_SF"/>
</dbReference>
<dbReference type="InterPro" id="IPR000851">
    <property type="entry name" value="Ribosomal_uS5"/>
</dbReference>
<dbReference type="InterPro" id="IPR005712">
    <property type="entry name" value="Ribosomal_uS5_bac-type"/>
</dbReference>
<dbReference type="InterPro" id="IPR005324">
    <property type="entry name" value="Ribosomal_uS5_C"/>
</dbReference>
<dbReference type="InterPro" id="IPR013810">
    <property type="entry name" value="Ribosomal_uS5_N"/>
</dbReference>
<dbReference type="InterPro" id="IPR018192">
    <property type="entry name" value="Ribosomal_uS5_N_CS"/>
</dbReference>
<dbReference type="InterPro" id="IPR014721">
    <property type="entry name" value="Ribsml_uS5_D2-typ_fold_subgr"/>
</dbReference>
<dbReference type="NCBIfam" id="TIGR01021">
    <property type="entry name" value="rpsE_bact"/>
    <property type="match status" value="1"/>
</dbReference>
<dbReference type="PANTHER" id="PTHR48277">
    <property type="entry name" value="MITOCHONDRIAL RIBOSOMAL PROTEIN S5"/>
    <property type="match status" value="1"/>
</dbReference>
<dbReference type="PANTHER" id="PTHR48277:SF1">
    <property type="entry name" value="MITOCHONDRIAL RIBOSOMAL PROTEIN S5"/>
    <property type="match status" value="1"/>
</dbReference>
<dbReference type="Pfam" id="PF00333">
    <property type="entry name" value="Ribosomal_S5"/>
    <property type="match status" value="1"/>
</dbReference>
<dbReference type="Pfam" id="PF03719">
    <property type="entry name" value="Ribosomal_S5_C"/>
    <property type="match status" value="1"/>
</dbReference>
<dbReference type="SUPFAM" id="SSF54768">
    <property type="entry name" value="dsRNA-binding domain-like"/>
    <property type="match status" value="1"/>
</dbReference>
<dbReference type="SUPFAM" id="SSF54211">
    <property type="entry name" value="Ribosomal protein S5 domain 2-like"/>
    <property type="match status" value="1"/>
</dbReference>
<dbReference type="PROSITE" id="PS00585">
    <property type="entry name" value="RIBOSOMAL_S5"/>
    <property type="match status" value="1"/>
</dbReference>
<dbReference type="PROSITE" id="PS50881">
    <property type="entry name" value="S5_DSRBD"/>
    <property type="match status" value="1"/>
</dbReference>
<accession>B8G1Y3</accession>
<sequence length="166" mass="16939">MAKIDASKLELTEKVVHIARVAKVVKGGRRFSFSALVVVGDGHGNVGAGLGKAGEVPEAIRKGMEDAKKNMVSVPLIGTTIPHAILGNYGAGSVLLKPAAKGTGVIAGGAVRAVLEVAGVSDILTKSLGSANPHNMVNATMAALKSLKRAEDVARLRGKTVEEILG</sequence>
<evidence type="ECO:0000255" key="1">
    <source>
        <dbReference type="HAMAP-Rule" id="MF_01307"/>
    </source>
</evidence>
<evidence type="ECO:0000305" key="2"/>
<organism>
    <name type="scientific">Desulfitobacterium hafniense (strain DSM 10664 / DCB-2)</name>
    <dbReference type="NCBI Taxonomy" id="272564"/>
    <lineage>
        <taxon>Bacteria</taxon>
        <taxon>Bacillati</taxon>
        <taxon>Bacillota</taxon>
        <taxon>Clostridia</taxon>
        <taxon>Eubacteriales</taxon>
        <taxon>Desulfitobacteriaceae</taxon>
        <taxon>Desulfitobacterium</taxon>
    </lineage>
</organism>
<comment type="function">
    <text evidence="1">With S4 and S12 plays an important role in translational accuracy.</text>
</comment>
<comment type="function">
    <text evidence="1">Located at the back of the 30S subunit body where it stabilizes the conformation of the head with respect to the body.</text>
</comment>
<comment type="subunit">
    <text evidence="1">Part of the 30S ribosomal subunit. Contacts proteins S4 and S8.</text>
</comment>
<comment type="domain">
    <text>The N-terminal domain interacts with the head of the 30S subunit; the C-terminal domain interacts with the body and contacts protein S4. The interaction surface between S4 and S5 is involved in control of translational fidelity.</text>
</comment>
<comment type="similarity">
    <text evidence="1">Belongs to the universal ribosomal protein uS5 family.</text>
</comment>
<keyword id="KW-0687">Ribonucleoprotein</keyword>
<keyword id="KW-0689">Ribosomal protein</keyword>
<keyword id="KW-0694">RNA-binding</keyword>
<keyword id="KW-0699">rRNA-binding</keyword>
<proteinExistence type="inferred from homology"/>
<protein>
    <recommendedName>
        <fullName evidence="1">Small ribosomal subunit protein uS5</fullName>
    </recommendedName>
    <alternativeName>
        <fullName evidence="2">30S ribosomal protein S5</fullName>
    </alternativeName>
</protein>
<gene>
    <name evidence="1" type="primary">rpsE</name>
    <name type="ordered locus">Dhaf_0439</name>
</gene>
<reference key="1">
    <citation type="journal article" date="2012" name="BMC Microbiol.">
        <title>Genome sequence of Desulfitobacterium hafniense DCB-2, a Gram-positive anaerobe capable of dehalogenation and metal reduction.</title>
        <authorList>
            <person name="Kim S.H."/>
            <person name="Harzman C."/>
            <person name="Davis J.K."/>
            <person name="Hutcheson R."/>
            <person name="Broderick J.B."/>
            <person name="Marsh T.L."/>
            <person name="Tiedje J.M."/>
        </authorList>
    </citation>
    <scope>NUCLEOTIDE SEQUENCE [LARGE SCALE GENOMIC DNA]</scope>
    <source>
        <strain>DSM 10664 / DCB-2</strain>
    </source>
</reference>
<feature type="chain" id="PRO_1000165450" description="Small ribosomal subunit protein uS5">
    <location>
        <begin position="1"/>
        <end position="166"/>
    </location>
</feature>
<feature type="domain" description="S5 DRBM" evidence="1">
    <location>
        <begin position="11"/>
        <end position="74"/>
    </location>
</feature>